<dbReference type="EC" id="2.5.1.55" evidence="1"/>
<dbReference type="EMBL" id="CP000360">
    <property type="protein sequence ID" value="ABF42670.1"/>
    <property type="molecule type" value="Genomic_DNA"/>
</dbReference>
<dbReference type="RefSeq" id="WP_011524469.1">
    <property type="nucleotide sequence ID" value="NC_008009.1"/>
</dbReference>
<dbReference type="SMR" id="Q1IKD0"/>
<dbReference type="STRING" id="204669.Acid345_3669"/>
<dbReference type="EnsemblBacteria" id="ABF42670">
    <property type="protein sequence ID" value="ABF42670"/>
    <property type="gene ID" value="Acid345_3669"/>
</dbReference>
<dbReference type="KEGG" id="aba:Acid345_3669"/>
<dbReference type="eggNOG" id="COG2877">
    <property type="taxonomic scope" value="Bacteria"/>
</dbReference>
<dbReference type="HOGENOM" id="CLU_036666_0_0_0"/>
<dbReference type="OrthoDB" id="9780456at2"/>
<dbReference type="UniPathway" id="UPA00030"/>
<dbReference type="UniPathway" id="UPA00357">
    <property type="reaction ID" value="UER00474"/>
</dbReference>
<dbReference type="Proteomes" id="UP000002432">
    <property type="component" value="Chromosome"/>
</dbReference>
<dbReference type="GO" id="GO:0005737">
    <property type="term" value="C:cytoplasm"/>
    <property type="evidence" value="ECO:0007669"/>
    <property type="project" value="UniProtKB-SubCell"/>
</dbReference>
<dbReference type="GO" id="GO:0008676">
    <property type="term" value="F:3-deoxy-8-phosphooctulonate synthase activity"/>
    <property type="evidence" value="ECO:0007669"/>
    <property type="project" value="UniProtKB-UniRule"/>
</dbReference>
<dbReference type="GO" id="GO:0019294">
    <property type="term" value="P:keto-3-deoxy-D-manno-octulosonic acid biosynthetic process"/>
    <property type="evidence" value="ECO:0007669"/>
    <property type="project" value="UniProtKB-UniRule"/>
</dbReference>
<dbReference type="Gene3D" id="3.20.20.70">
    <property type="entry name" value="Aldolase class I"/>
    <property type="match status" value="1"/>
</dbReference>
<dbReference type="HAMAP" id="MF_00056">
    <property type="entry name" value="KDO8P_synth"/>
    <property type="match status" value="1"/>
</dbReference>
<dbReference type="InterPro" id="IPR013785">
    <property type="entry name" value="Aldolase_TIM"/>
</dbReference>
<dbReference type="InterPro" id="IPR006218">
    <property type="entry name" value="DAHP1/KDSA"/>
</dbReference>
<dbReference type="InterPro" id="IPR006269">
    <property type="entry name" value="KDO8P_synthase"/>
</dbReference>
<dbReference type="NCBIfam" id="TIGR01362">
    <property type="entry name" value="KDO8P_synth"/>
    <property type="match status" value="1"/>
</dbReference>
<dbReference type="NCBIfam" id="NF003543">
    <property type="entry name" value="PRK05198.1"/>
    <property type="match status" value="1"/>
</dbReference>
<dbReference type="PANTHER" id="PTHR21057">
    <property type="entry name" value="PHOSPHO-2-DEHYDRO-3-DEOXYHEPTONATE ALDOLASE"/>
    <property type="match status" value="1"/>
</dbReference>
<dbReference type="Pfam" id="PF00793">
    <property type="entry name" value="DAHP_synth_1"/>
    <property type="match status" value="1"/>
</dbReference>
<dbReference type="SUPFAM" id="SSF51569">
    <property type="entry name" value="Aldolase"/>
    <property type="match status" value="1"/>
</dbReference>
<proteinExistence type="inferred from homology"/>
<reference key="1">
    <citation type="journal article" date="2009" name="Appl. Environ. Microbiol.">
        <title>Three genomes from the phylum Acidobacteria provide insight into the lifestyles of these microorganisms in soils.</title>
        <authorList>
            <person name="Ward N.L."/>
            <person name="Challacombe J.F."/>
            <person name="Janssen P.H."/>
            <person name="Henrissat B."/>
            <person name="Coutinho P.M."/>
            <person name="Wu M."/>
            <person name="Xie G."/>
            <person name="Haft D.H."/>
            <person name="Sait M."/>
            <person name="Badger J."/>
            <person name="Barabote R.D."/>
            <person name="Bradley B."/>
            <person name="Brettin T.S."/>
            <person name="Brinkac L.M."/>
            <person name="Bruce D."/>
            <person name="Creasy T."/>
            <person name="Daugherty S.C."/>
            <person name="Davidsen T.M."/>
            <person name="DeBoy R.T."/>
            <person name="Detter J.C."/>
            <person name="Dodson R.J."/>
            <person name="Durkin A.S."/>
            <person name="Ganapathy A."/>
            <person name="Gwinn-Giglio M."/>
            <person name="Han C.S."/>
            <person name="Khouri H."/>
            <person name="Kiss H."/>
            <person name="Kothari S.P."/>
            <person name="Madupu R."/>
            <person name="Nelson K.E."/>
            <person name="Nelson W.C."/>
            <person name="Paulsen I."/>
            <person name="Penn K."/>
            <person name="Ren Q."/>
            <person name="Rosovitz M.J."/>
            <person name="Selengut J.D."/>
            <person name="Shrivastava S."/>
            <person name="Sullivan S.A."/>
            <person name="Tapia R."/>
            <person name="Thompson L.S."/>
            <person name="Watkins K.L."/>
            <person name="Yang Q."/>
            <person name="Yu C."/>
            <person name="Zafar N."/>
            <person name="Zhou L."/>
            <person name="Kuske C.R."/>
        </authorList>
    </citation>
    <scope>NUCLEOTIDE SEQUENCE [LARGE SCALE GENOMIC DNA]</scope>
    <source>
        <strain>Ellin345</strain>
    </source>
</reference>
<name>KDSA_KORVE</name>
<feature type="chain" id="PRO_0000304426" description="2-dehydro-3-deoxyphosphooctonate aldolase">
    <location>
        <begin position="1"/>
        <end position="278"/>
    </location>
</feature>
<keyword id="KW-0963">Cytoplasm</keyword>
<keyword id="KW-0448">Lipopolysaccharide biosynthesis</keyword>
<keyword id="KW-1185">Reference proteome</keyword>
<keyword id="KW-0808">Transferase</keyword>
<organism>
    <name type="scientific">Koribacter versatilis (strain Ellin345)</name>
    <dbReference type="NCBI Taxonomy" id="204669"/>
    <lineage>
        <taxon>Bacteria</taxon>
        <taxon>Pseudomonadati</taxon>
        <taxon>Acidobacteriota</taxon>
        <taxon>Terriglobia</taxon>
        <taxon>Terriglobales</taxon>
        <taxon>Candidatus Korobacteraceae</taxon>
        <taxon>Candidatus Korobacter</taxon>
    </lineage>
</organism>
<sequence>MIEPFKVKDVEIGGPKLFLIAGPCVIESEAHAMKMAEAISGVCKAMKIPYIFKASYDKANRTSLSSFRGPGLHEGLRILAKVADEVNVPVLTDVHDTEQATAAGDIVDVLQIPAFLCRQTDLLVAAAKTGKVVNVKKGQFVAPNDMQYAVTKVRESGNQRVCLTERGASFGYNNLVVDMRALPIMRQFAPVIFDATHSVQLPSAGKDGHAVSGGQPEFIPVLSRAAVAAGVDGVFMEVHDDPPHAKSDGANALDLKLLRGVLTSLLRIREAVTPPAAS</sequence>
<evidence type="ECO:0000255" key="1">
    <source>
        <dbReference type="HAMAP-Rule" id="MF_00056"/>
    </source>
</evidence>
<accession>Q1IKD0</accession>
<gene>
    <name evidence="1" type="primary">kdsA</name>
    <name type="ordered locus">Acid345_3669</name>
</gene>
<comment type="catalytic activity">
    <reaction evidence="1">
        <text>D-arabinose 5-phosphate + phosphoenolpyruvate + H2O = 3-deoxy-alpha-D-manno-2-octulosonate-8-phosphate + phosphate</text>
        <dbReference type="Rhea" id="RHEA:14053"/>
        <dbReference type="ChEBI" id="CHEBI:15377"/>
        <dbReference type="ChEBI" id="CHEBI:43474"/>
        <dbReference type="ChEBI" id="CHEBI:57693"/>
        <dbReference type="ChEBI" id="CHEBI:58702"/>
        <dbReference type="ChEBI" id="CHEBI:85985"/>
        <dbReference type="EC" id="2.5.1.55"/>
    </reaction>
</comment>
<comment type="pathway">
    <text evidence="1">Carbohydrate biosynthesis; 3-deoxy-D-manno-octulosonate biosynthesis; 3-deoxy-D-manno-octulosonate from D-ribulose 5-phosphate: step 2/3.</text>
</comment>
<comment type="pathway">
    <text evidence="1">Bacterial outer membrane biogenesis; lipopolysaccharide biosynthesis.</text>
</comment>
<comment type="subcellular location">
    <subcellularLocation>
        <location evidence="1">Cytoplasm</location>
    </subcellularLocation>
</comment>
<comment type="similarity">
    <text evidence="1">Belongs to the KdsA family.</text>
</comment>
<protein>
    <recommendedName>
        <fullName evidence="1">2-dehydro-3-deoxyphosphooctonate aldolase</fullName>
        <ecNumber evidence="1">2.5.1.55</ecNumber>
    </recommendedName>
    <alternativeName>
        <fullName evidence="1">3-deoxy-D-manno-octulosonic acid 8-phosphate synthase</fullName>
    </alternativeName>
    <alternativeName>
        <fullName evidence="1">KDO-8-phosphate synthase</fullName>
        <shortName evidence="1">KDO 8-P synthase</shortName>
        <shortName evidence="1">KDOPS</shortName>
    </alternativeName>
    <alternativeName>
        <fullName evidence="1">Phospho-2-dehydro-3-deoxyoctonate aldolase</fullName>
    </alternativeName>
</protein>